<evidence type="ECO:0000250" key="1"/>
<evidence type="ECO:0000255" key="2"/>
<evidence type="ECO:0000269" key="3">
    <source>
    </source>
</evidence>
<evidence type="ECO:0000305" key="4"/>
<keyword id="KW-1015">Disulfide bond</keyword>
<keyword id="KW-0325">Glycoprotein</keyword>
<keyword id="KW-0372">Hormone</keyword>
<keyword id="KW-1185">Reference proteome</keyword>
<keyword id="KW-0964">Secreted</keyword>
<keyword id="KW-0732">Signal</keyword>
<reference key="1">
    <citation type="journal article" date="1998" name="Nature">
        <title>Analysis of 1.9 Mb of contiguous sequence from chromosome 4 of Arabidopsis thaliana.</title>
        <authorList>
            <person name="Bevan M."/>
            <person name="Bancroft I."/>
            <person name="Bent E."/>
            <person name="Love K."/>
            <person name="Goodman H.M."/>
            <person name="Dean C."/>
            <person name="Bergkamp R."/>
            <person name="Dirkse W."/>
            <person name="van Staveren M."/>
            <person name="Stiekema W."/>
            <person name="Drost L."/>
            <person name="Ridley P."/>
            <person name="Hudson S.-A."/>
            <person name="Patel K."/>
            <person name="Murphy G."/>
            <person name="Piffanelli P."/>
            <person name="Wedler H."/>
            <person name="Wedler E."/>
            <person name="Wambutt R."/>
            <person name="Weitzenegger T."/>
            <person name="Pohl T."/>
            <person name="Terryn N."/>
            <person name="Gielen J."/>
            <person name="Villarroel R."/>
            <person name="De Clercq R."/>
            <person name="van Montagu M."/>
            <person name="Lecharny A."/>
            <person name="Aubourg S."/>
            <person name="Gy I."/>
            <person name="Kreis M."/>
            <person name="Lao N."/>
            <person name="Kavanagh T."/>
            <person name="Hempel S."/>
            <person name="Kotter P."/>
            <person name="Entian K.-D."/>
            <person name="Rieger M."/>
            <person name="Schaefer M."/>
            <person name="Funk B."/>
            <person name="Mueller-Auer S."/>
            <person name="Silvey M."/>
            <person name="James R."/>
            <person name="Monfort A."/>
            <person name="Pons A."/>
            <person name="Puigdomenech P."/>
            <person name="Douka A."/>
            <person name="Voukelatou E."/>
            <person name="Milioni D."/>
            <person name="Hatzopoulos P."/>
            <person name="Piravandi E."/>
            <person name="Obermaier B."/>
            <person name="Hilbert H."/>
            <person name="Duesterhoeft A."/>
            <person name="Moores T."/>
            <person name="Jones J.D.G."/>
            <person name="Eneva T."/>
            <person name="Palme K."/>
            <person name="Benes V."/>
            <person name="Rechmann S."/>
            <person name="Ansorge W."/>
            <person name="Cooke R."/>
            <person name="Berger C."/>
            <person name="Delseny M."/>
            <person name="Voet M."/>
            <person name="Volckaert G."/>
            <person name="Mewes H.-W."/>
            <person name="Klosterman S."/>
            <person name="Schueller C."/>
            <person name="Chalwatzis N."/>
        </authorList>
    </citation>
    <scope>NUCLEOTIDE SEQUENCE [LARGE SCALE GENOMIC DNA]</scope>
    <source>
        <strain>cv. Columbia</strain>
    </source>
</reference>
<reference key="2">
    <citation type="journal article" date="1999" name="Nature">
        <title>Sequence and analysis of chromosome 4 of the plant Arabidopsis thaliana.</title>
        <authorList>
            <person name="Mayer K.F.X."/>
            <person name="Schueller C."/>
            <person name="Wambutt R."/>
            <person name="Murphy G."/>
            <person name="Volckaert G."/>
            <person name="Pohl T."/>
            <person name="Duesterhoeft A."/>
            <person name="Stiekema W."/>
            <person name="Entian K.-D."/>
            <person name="Terryn N."/>
            <person name="Harris B."/>
            <person name="Ansorge W."/>
            <person name="Brandt P."/>
            <person name="Grivell L.A."/>
            <person name="Rieger M."/>
            <person name="Weichselgartner M."/>
            <person name="de Simone V."/>
            <person name="Obermaier B."/>
            <person name="Mache R."/>
            <person name="Mueller M."/>
            <person name="Kreis M."/>
            <person name="Delseny M."/>
            <person name="Puigdomenech P."/>
            <person name="Watson M."/>
            <person name="Schmidtheini T."/>
            <person name="Reichert B."/>
            <person name="Portetelle D."/>
            <person name="Perez-Alonso M."/>
            <person name="Boutry M."/>
            <person name="Bancroft I."/>
            <person name="Vos P."/>
            <person name="Hoheisel J."/>
            <person name="Zimmermann W."/>
            <person name="Wedler H."/>
            <person name="Ridley P."/>
            <person name="Langham S.-A."/>
            <person name="McCullagh B."/>
            <person name="Bilham L."/>
            <person name="Robben J."/>
            <person name="van der Schueren J."/>
            <person name="Grymonprez B."/>
            <person name="Chuang Y.-J."/>
            <person name="Vandenbussche F."/>
            <person name="Braeken M."/>
            <person name="Weltjens I."/>
            <person name="Voet M."/>
            <person name="Bastiaens I."/>
            <person name="Aert R."/>
            <person name="Defoor E."/>
            <person name="Weitzenegger T."/>
            <person name="Bothe G."/>
            <person name="Ramsperger U."/>
            <person name="Hilbert H."/>
            <person name="Braun M."/>
            <person name="Holzer E."/>
            <person name="Brandt A."/>
            <person name="Peters S."/>
            <person name="van Staveren M."/>
            <person name="Dirkse W."/>
            <person name="Mooijman P."/>
            <person name="Klein Lankhorst R."/>
            <person name="Rose M."/>
            <person name="Hauf J."/>
            <person name="Koetter P."/>
            <person name="Berneiser S."/>
            <person name="Hempel S."/>
            <person name="Feldpausch M."/>
            <person name="Lamberth S."/>
            <person name="Van den Daele H."/>
            <person name="De Keyser A."/>
            <person name="Buysshaert C."/>
            <person name="Gielen J."/>
            <person name="Villarroel R."/>
            <person name="De Clercq R."/>
            <person name="van Montagu M."/>
            <person name="Rogers J."/>
            <person name="Cronin A."/>
            <person name="Quail M.A."/>
            <person name="Bray-Allen S."/>
            <person name="Clark L."/>
            <person name="Doggett J."/>
            <person name="Hall S."/>
            <person name="Kay M."/>
            <person name="Lennard N."/>
            <person name="McLay K."/>
            <person name="Mayes R."/>
            <person name="Pettett A."/>
            <person name="Rajandream M.A."/>
            <person name="Lyne M."/>
            <person name="Benes V."/>
            <person name="Rechmann S."/>
            <person name="Borkova D."/>
            <person name="Bloecker H."/>
            <person name="Scharfe M."/>
            <person name="Grimm M."/>
            <person name="Loehnert T.-H."/>
            <person name="Dose S."/>
            <person name="de Haan M."/>
            <person name="Maarse A.C."/>
            <person name="Schaefer M."/>
            <person name="Mueller-Auer S."/>
            <person name="Gabel C."/>
            <person name="Fuchs M."/>
            <person name="Fartmann B."/>
            <person name="Granderath K."/>
            <person name="Dauner D."/>
            <person name="Herzl A."/>
            <person name="Neumann S."/>
            <person name="Argiriou A."/>
            <person name="Vitale D."/>
            <person name="Liguori R."/>
            <person name="Piravandi E."/>
            <person name="Massenet O."/>
            <person name="Quigley F."/>
            <person name="Clabauld G."/>
            <person name="Muendlein A."/>
            <person name="Felber R."/>
            <person name="Schnabl S."/>
            <person name="Hiller R."/>
            <person name="Schmidt W."/>
            <person name="Lecharny A."/>
            <person name="Aubourg S."/>
            <person name="Chefdor F."/>
            <person name="Cooke R."/>
            <person name="Berger C."/>
            <person name="Monfort A."/>
            <person name="Casacuberta E."/>
            <person name="Gibbons T."/>
            <person name="Weber N."/>
            <person name="Vandenbol M."/>
            <person name="Bargues M."/>
            <person name="Terol J."/>
            <person name="Torres A."/>
            <person name="Perez-Perez A."/>
            <person name="Purnelle B."/>
            <person name="Bent E."/>
            <person name="Johnson S."/>
            <person name="Tacon D."/>
            <person name="Jesse T."/>
            <person name="Heijnen L."/>
            <person name="Schwarz S."/>
            <person name="Scholler P."/>
            <person name="Heber S."/>
            <person name="Francs P."/>
            <person name="Bielke C."/>
            <person name="Frishman D."/>
            <person name="Haase D."/>
            <person name="Lemcke K."/>
            <person name="Mewes H.-W."/>
            <person name="Stocker S."/>
            <person name="Zaccaria P."/>
            <person name="Bevan M."/>
            <person name="Wilson R.K."/>
            <person name="de la Bastide M."/>
            <person name="Habermann K."/>
            <person name="Parnell L."/>
            <person name="Dedhia N."/>
            <person name="Gnoj L."/>
            <person name="Schutz K."/>
            <person name="Huang E."/>
            <person name="Spiegel L."/>
            <person name="Sekhon M."/>
            <person name="Murray J."/>
            <person name="Sheet P."/>
            <person name="Cordes M."/>
            <person name="Abu-Threideh J."/>
            <person name="Stoneking T."/>
            <person name="Kalicki J."/>
            <person name="Graves T."/>
            <person name="Harmon G."/>
            <person name="Edwards J."/>
            <person name="Latreille P."/>
            <person name="Courtney L."/>
            <person name="Cloud J."/>
            <person name="Abbott A."/>
            <person name="Scott K."/>
            <person name="Johnson D."/>
            <person name="Minx P."/>
            <person name="Bentley D."/>
            <person name="Fulton B."/>
            <person name="Miller N."/>
            <person name="Greco T."/>
            <person name="Kemp K."/>
            <person name="Kramer J."/>
            <person name="Fulton L."/>
            <person name="Mardis E."/>
            <person name="Dante M."/>
            <person name="Pepin K."/>
            <person name="Hillier L.W."/>
            <person name="Nelson J."/>
            <person name="Spieth J."/>
            <person name="Ryan E."/>
            <person name="Andrews S."/>
            <person name="Geisel C."/>
            <person name="Layman D."/>
            <person name="Du H."/>
            <person name="Ali J."/>
            <person name="Berghoff A."/>
            <person name="Jones K."/>
            <person name="Drone K."/>
            <person name="Cotton M."/>
            <person name="Joshu C."/>
            <person name="Antonoiu B."/>
            <person name="Zidanic M."/>
            <person name="Strong C."/>
            <person name="Sun H."/>
            <person name="Lamar B."/>
            <person name="Yordan C."/>
            <person name="Ma P."/>
            <person name="Zhong J."/>
            <person name="Preston R."/>
            <person name="Vil D."/>
            <person name="Shekher M."/>
            <person name="Matero A."/>
            <person name="Shah R."/>
            <person name="Swaby I.K."/>
            <person name="O'Shaughnessy A."/>
            <person name="Rodriguez M."/>
            <person name="Hoffman J."/>
            <person name="Till S."/>
            <person name="Granat S."/>
            <person name="Shohdy N."/>
            <person name="Hasegawa A."/>
            <person name="Hameed A."/>
            <person name="Lodhi M."/>
            <person name="Johnson A."/>
            <person name="Chen E."/>
            <person name="Marra M.A."/>
            <person name="Martienssen R."/>
            <person name="McCombie W.R."/>
        </authorList>
    </citation>
    <scope>NUCLEOTIDE SEQUENCE [LARGE SCALE GENOMIC DNA]</scope>
    <source>
        <strain>cv. Columbia</strain>
    </source>
</reference>
<reference key="3">
    <citation type="journal article" date="2017" name="Plant J.">
        <title>Araport11: a complete reannotation of the Arabidopsis thaliana reference genome.</title>
        <authorList>
            <person name="Cheng C.Y."/>
            <person name="Krishnakumar V."/>
            <person name="Chan A.P."/>
            <person name="Thibaud-Nissen F."/>
            <person name="Schobel S."/>
            <person name="Town C.D."/>
        </authorList>
    </citation>
    <scope>GENOME REANNOTATION</scope>
    <source>
        <strain>cv. Columbia</strain>
    </source>
</reference>
<reference key="4">
    <citation type="submission" date="2006-05" db="EMBL/GenBank/DDBJ databases">
        <title>Arabidopsis ORF clones.</title>
        <authorList>
            <person name="Quinitio C."/>
            <person name="Chen H."/>
            <person name="Kim C.J."/>
            <person name="Shinn P."/>
            <person name="Ecker J.R."/>
        </authorList>
    </citation>
    <scope>NUCLEOTIDE SEQUENCE [LARGE SCALE MRNA]</scope>
</reference>
<reference key="5">
    <citation type="submission" date="2006-07" db="EMBL/GenBank/DDBJ databases">
        <title>Large-scale analysis of RIKEN Arabidopsis full-length (RAFL) cDNAs.</title>
        <authorList>
            <person name="Totoki Y."/>
            <person name="Seki M."/>
            <person name="Ishida J."/>
            <person name="Nakajima M."/>
            <person name="Enju A."/>
            <person name="Kamiya A."/>
            <person name="Narusaka M."/>
            <person name="Shin-i T."/>
            <person name="Nakagawa M."/>
            <person name="Sakamoto N."/>
            <person name="Oishi K."/>
            <person name="Kohara Y."/>
            <person name="Kobayashi M."/>
            <person name="Toyoda A."/>
            <person name="Sakaki Y."/>
            <person name="Sakurai T."/>
            <person name="Iida K."/>
            <person name="Akiyama K."/>
            <person name="Satou M."/>
            <person name="Toyoda T."/>
            <person name="Konagaya A."/>
            <person name="Carninci P."/>
            <person name="Kawai J."/>
            <person name="Hayashizaki Y."/>
            <person name="Shinozaki K."/>
        </authorList>
    </citation>
    <scope>NUCLEOTIDE SEQUENCE [LARGE SCALE MRNA]</scope>
    <source>
        <strain>cv. Columbia</strain>
    </source>
</reference>
<reference key="6">
    <citation type="submission" date="2002-03" db="EMBL/GenBank/DDBJ databases">
        <title>Full-length cDNA from Arabidopsis thaliana.</title>
        <authorList>
            <person name="Brover V.V."/>
            <person name="Troukhan M.E."/>
            <person name="Alexandrov N.A."/>
            <person name="Lu Y.-P."/>
            <person name="Flavell R.B."/>
            <person name="Feldmann K.A."/>
        </authorList>
    </citation>
    <scope>NUCLEOTIDE SEQUENCE [LARGE SCALE MRNA]</scope>
</reference>
<reference key="7">
    <citation type="journal article" date="2002" name="In Silico Biol.">
        <title>Peptomics, identification of novel cationic Arabidopsis peptides with conserved sequence motifs.</title>
        <authorList>
            <person name="Olsen A.N."/>
            <person name="Mundy J."/>
            <person name="Skriver K."/>
        </authorList>
    </citation>
    <scope>TISSUE SPECIFICITY</scope>
    <scope>GENE FAMILY</scope>
    <scope>NOMENCLATURE</scope>
</reference>
<organism>
    <name type="scientific">Arabidopsis thaliana</name>
    <name type="common">Mouse-ear cress</name>
    <dbReference type="NCBI Taxonomy" id="3702"/>
    <lineage>
        <taxon>Eukaryota</taxon>
        <taxon>Viridiplantae</taxon>
        <taxon>Streptophyta</taxon>
        <taxon>Embryophyta</taxon>
        <taxon>Tracheophyta</taxon>
        <taxon>Spermatophyta</taxon>
        <taxon>Magnoliopsida</taxon>
        <taxon>eudicotyledons</taxon>
        <taxon>Gunneridae</taxon>
        <taxon>Pentapetalae</taxon>
        <taxon>rosids</taxon>
        <taxon>malvids</taxon>
        <taxon>Brassicales</taxon>
        <taxon>Brassicaceae</taxon>
        <taxon>Camelineae</taxon>
        <taxon>Arabidopsis</taxon>
    </lineage>
</organism>
<feature type="signal peptide" evidence="2">
    <location>
        <begin position="1"/>
        <end position="23"/>
    </location>
</feature>
<feature type="propeptide" id="PRO_0000420333" description="Removed in mature form" evidence="1">
    <location>
        <begin position="24"/>
        <end position="67"/>
    </location>
</feature>
<feature type="chain" id="PRO_0000420334" description="Protein RALF-like 33">
    <location>
        <begin position="68"/>
        <end position="116"/>
    </location>
</feature>
<feature type="site" description="Required for proteolytic cleavage" evidence="1">
    <location>
        <begin position="64"/>
        <end position="65"/>
    </location>
</feature>
<feature type="glycosylation site" description="N-linked (GlcNAc...) asparagine" evidence="2">
    <location>
        <position position="41"/>
    </location>
</feature>
<feature type="disulfide bond" evidence="1">
    <location>
        <begin position="85"/>
        <end position="95"/>
    </location>
</feature>
<feature type="disulfide bond" evidence="1">
    <location>
        <begin position="108"/>
        <end position="114"/>
    </location>
</feature>
<name>RLF33_ARATH</name>
<protein>
    <recommendedName>
        <fullName>Protein RALF-like 33</fullName>
    </recommendedName>
</protein>
<sequence length="116" mass="12806">MRGLSTKPVAIIIAILTVHFLFAAVTSQSSGDFVPIESKCNGTIAECSLSTAEEEFEMDSEINRRILATTKYISYGALRRNTVPCSRRGASYYNCRRGAQANPYSRGCSAITRCRR</sequence>
<accession>Q8L9P8</accession>
<dbReference type="EMBL" id="Z97339">
    <property type="status" value="NOT_ANNOTATED_CDS"/>
    <property type="molecule type" value="Genomic_DNA"/>
</dbReference>
<dbReference type="EMBL" id="AL117321">
    <property type="status" value="NOT_ANNOTATED_CDS"/>
    <property type="molecule type" value="Genomic_DNA"/>
</dbReference>
<dbReference type="EMBL" id="CP002687">
    <property type="protein sequence ID" value="AEE83653.1"/>
    <property type="molecule type" value="Genomic_DNA"/>
</dbReference>
<dbReference type="EMBL" id="BT025592">
    <property type="protein sequence ID" value="ABF59010.1"/>
    <property type="molecule type" value="mRNA"/>
</dbReference>
<dbReference type="EMBL" id="AK226956">
    <property type="protein sequence ID" value="BAE99025.1"/>
    <property type="molecule type" value="mRNA"/>
</dbReference>
<dbReference type="EMBL" id="AY088306">
    <property type="protein sequence ID" value="AAM65845.1"/>
    <property type="molecule type" value="mRNA"/>
</dbReference>
<dbReference type="RefSeq" id="NP_567476.1">
    <property type="nucleotide sequence ID" value="NM_117672.2"/>
</dbReference>
<dbReference type="SMR" id="Q8L9P8"/>
<dbReference type="FunCoup" id="Q8L9P8">
    <property type="interactions" value="47"/>
</dbReference>
<dbReference type="STRING" id="3702.Q8L9P8"/>
<dbReference type="GlyCosmos" id="Q8L9P8">
    <property type="glycosylation" value="1 site, No reported glycans"/>
</dbReference>
<dbReference type="GlyGen" id="Q8L9P8">
    <property type="glycosylation" value="1 site"/>
</dbReference>
<dbReference type="PaxDb" id="3702-AT4G15800.1"/>
<dbReference type="ProteomicsDB" id="228181"/>
<dbReference type="EnsemblPlants" id="AT4G15800.1">
    <property type="protein sequence ID" value="AT4G15800.1"/>
    <property type="gene ID" value="AT4G15800"/>
</dbReference>
<dbReference type="GeneID" id="827260"/>
<dbReference type="Gramene" id="AT4G15800.1">
    <property type="protein sequence ID" value="AT4G15800.1"/>
    <property type="gene ID" value="AT4G15800"/>
</dbReference>
<dbReference type="KEGG" id="ath:AT4G15800"/>
<dbReference type="Araport" id="AT4G15800"/>
<dbReference type="TAIR" id="AT4G15800">
    <property type="gene designation" value="RALFL33"/>
</dbReference>
<dbReference type="eggNOG" id="ENOG502S1TF">
    <property type="taxonomic scope" value="Eukaryota"/>
</dbReference>
<dbReference type="HOGENOM" id="CLU_127895_1_2_1"/>
<dbReference type="InParanoid" id="Q8L9P8"/>
<dbReference type="OMA" id="WMVPARS"/>
<dbReference type="PhylomeDB" id="Q8L9P8"/>
<dbReference type="PRO" id="PR:Q8L9P8"/>
<dbReference type="Proteomes" id="UP000006548">
    <property type="component" value="Chromosome 4"/>
</dbReference>
<dbReference type="ExpressionAtlas" id="Q8L9P8">
    <property type="expression patterns" value="baseline and differential"/>
</dbReference>
<dbReference type="GO" id="GO:0048046">
    <property type="term" value="C:apoplast"/>
    <property type="evidence" value="ECO:0000250"/>
    <property type="project" value="TAIR"/>
</dbReference>
<dbReference type="GO" id="GO:0009505">
    <property type="term" value="C:plant-type cell wall"/>
    <property type="evidence" value="ECO:0007005"/>
    <property type="project" value="TAIR"/>
</dbReference>
<dbReference type="GO" id="GO:0009506">
    <property type="term" value="C:plasmodesma"/>
    <property type="evidence" value="ECO:0007005"/>
    <property type="project" value="TAIR"/>
</dbReference>
<dbReference type="GO" id="GO:0005179">
    <property type="term" value="F:hormone activity"/>
    <property type="evidence" value="ECO:0000250"/>
    <property type="project" value="UniProtKB"/>
</dbReference>
<dbReference type="GO" id="GO:0019722">
    <property type="term" value="P:calcium-mediated signaling"/>
    <property type="evidence" value="ECO:0000250"/>
    <property type="project" value="UniProtKB"/>
</dbReference>
<dbReference type="GO" id="GO:0007267">
    <property type="term" value="P:cell-cell signaling"/>
    <property type="evidence" value="ECO:0000250"/>
    <property type="project" value="TAIR"/>
</dbReference>
<dbReference type="GO" id="GO:0040008">
    <property type="term" value="P:regulation of growth"/>
    <property type="evidence" value="ECO:0007669"/>
    <property type="project" value="UniProtKB-ARBA"/>
</dbReference>
<dbReference type="InterPro" id="IPR008801">
    <property type="entry name" value="RALF"/>
</dbReference>
<dbReference type="PANTHER" id="PTHR33136:SF95">
    <property type="entry name" value="PROTEIN RALF-LIKE 33-RELATED"/>
    <property type="match status" value="1"/>
</dbReference>
<dbReference type="PANTHER" id="PTHR33136">
    <property type="entry name" value="RAPID ALKALINIZATION FACTOR-LIKE"/>
    <property type="match status" value="1"/>
</dbReference>
<dbReference type="Pfam" id="PF05498">
    <property type="entry name" value="RALF"/>
    <property type="match status" value="1"/>
</dbReference>
<proteinExistence type="evidence at transcript level"/>
<gene>
    <name type="primary">RALFL33</name>
    <name type="ordered locus">At4g15800</name>
    <name type="ORF">dl3940c</name>
    <name type="ORF">FCAALL.206</name>
</gene>
<comment type="function">
    <text evidence="1">Cell signaling peptide that may regulate plant stress, growth, and development. Mediates a rapid alkalinization of extracellular space by mediating a transient increase in the cytoplasmic Ca(2+) concentration leading to a calcium-dependent signaling events through a cell surface receptor and a concomitant activation of some intracellular mitogen-activated protein kinases (By similarity).</text>
</comment>
<comment type="subcellular location">
    <subcellularLocation>
        <location evidence="1">Secreted</location>
    </subcellularLocation>
</comment>
<comment type="tissue specificity">
    <text evidence="3">Expressed in roots, stems, leaves and plants.</text>
</comment>
<comment type="PTM">
    <text evidence="1">Proteolytically cleaved, probably by S1P, a subtilisin-like serine protease (subtilase).</text>
</comment>
<comment type="similarity">
    <text evidence="4">Belongs to the plant rapid alkalinization factor (RALF) family.</text>
</comment>